<keyword id="KW-0472">Membrane</keyword>
<keyword id="KW-1185">Reference proteome</keyword>
<keyword id="KW-0812">Transmembrane</keyword>
<keyword id="KW-1133">Transmembrane helix</keyword>
<gene>
    <name type="ORF">DDB_G0286421</name>
</gene>
<evidence type="ECO:0000255" key="1"/>
<evidence type="ECO:0000305" key="2"/>
<reference key="1">
    <citation type="journal article" date="2005" name="Nature">
        <title>The genome of the social amoeba Dictyostelium discoideum.</title>
        <authorList>
            <person name="Eichinger L."/>
            <person name="Pachebat J.A."/>
            <person name="Gloeckner G."/>
            <person name="Rajandream M.A."/>
            <person name="Sucgang R."/>
            <person name="Berriman M."/>
            <person name="Song J."/>
            <person name="Olsen R."/>
            <person name="Szafranski K."/>
            <person name="Xu Q."/>
            <person name="Tunggal B."/>
            <person name="Kummerfeld S."/>
            <person name="Madera M."/>
            <person name="Konfortov B.A."/>
            <person name="Rivero F."/>
            <person name="Bankier A.T."/>
            <person name="Lehmann R."/>
            <person name="Hamlin N."/>
            <person name="Davies R."/>
            <person name="Gaudet P."/>
            <person name="Fey P."/>
            <person name="Pilcher K."/>
            <person name="Chen G."/>
            <person name="Saunders D."/>
            <person name="Sodergren E.J."/>
            <person name="Davis P."/>
            <person name="Kerhornou A."/>
            <person name="Nie X."/>
            <person name="Hall N."/>
            <person name="Anjard C."/>
            <person name="Hemphill L."/>
            <person name="Bason N."/>
            <person name="Farbrother P."/>
            <person name="Desany B."/>
            <person name="Just E."/>
            <person name="Morio T."/>
            <person name="Rost R."/>
            <person name="Churcher C.M."/>
            <person name="Cooper J."/>
            <person name="Haydock S."/>
            <person name="van Driessche N."/>
            <person name="Cronin A."/>
            <person name="Goodhead I."/>
            <person name="Muzny D.M."/>
            <person name="Mourier T."/>
            <person name="Pain A."/>
            <person name="Lu M."/>
            <person name="Harper D."/>
            <person name="Lindsay R."/>
            <person name="Hauser H."/>
            <person name="James K.D."/>
            <person name="Quiles M."/>
            <person name="Madan Babu M."/>
            <person name="Saito T."/>
            <person name="Buchrieser C."/>
            <person name="Wardroper A."/>
            <person name="Felder M."/>
            <person name="Thangavelu M."/>
            <person name="Johnson D."/>
            <person name="Knights A."/>
            <person name="Loulseged H."/>
            <person name="Mungall K.L."/>
            <person name="Oliver K."/>
            <person name="Price C."/>
            <person name="Quail M.A."/>
            <person name="Urushihara H."/>
            <person name="Hernandez J."/>
            <person name="Rabbinowitsch E."/>
            <person name="Steffen D."/>
            <person name="Sanders M."/>
            <person name="Ma J."/>
            <person name="Kohara Y."/>
            <person name="Sharp S."/>
            <person name="Simmonds M.N."/>
            <person name="Spiegler S."/>
            <person name="Tivey A."/>
            <person name="Sugano S."/>
            <person name="White B."/>
            <person name="Walker D."/>
            <person name="Woodward J.R."/>
            <person name="Winckler T."/>
            <person name="Tanaka Y."/>
            <person name="Shaulsky G."/>
            <person name="Schleicher M."/>
            <person name="Weinstock G.M."/>
            <person name="Rosenthal A."/>
            <person name="Cox E.C."/>
            <person name="Chisholm R.L."/>
            <person name="Gibbs R.A."/>
            <person name="Loomis W.F."/>
            <person name="Platzer M."/>
            <person name="Kay R.R."/>
            <person name="Williams J.G."/>
            <person name="Dear P.H."/>
            <person name="Noegel A.A."/>
            <person name="Barrell B.G."/>
            <person name="Kuspa A."/>
        </authorList>
    </citation>
    <scope>NUCLEOTIDE SEQUENCE [LARGE SCALE GENOMIC DNA]</scope>
    <source>
        <strain>AX4</strain>
    </source>
</reference>
<comment type="subcellular location">
    <subcellularLocation>
        <location evidence="2">Membrane</location>
        <topology evidence="2">Single-pass membrane protein</topology>
    </subcellularLocation>
</comment>
<name>Y6967_DICDI</name>
<accession>Q54LT5</accession>
<sequence>MVGINKPEPFGTGINVPYKLQKVQYFRENFQAFFKFTPKIVLNLVVLVGVVPLTWMFLGQVQQDQKVIVNRKAREQ</sequence>
<organism>
    <name type="scientific">Dictyostelium discoideum</name>
    <name type="common">Social amoeba</name>
    <dbReference type="NCBI Taxonomy" id="44689"/>
    <lineage>
        <taxon>Eukaryota</taxon>
        <taxon>Amoebozoa</taxon>
        <taxon>Evosea</taxon>
        <taxon>Eumycetozoa</taxon>
        <taxon>Dictyostelia</taxon>
        <taxon>Dictyosteliales</taxon>
        <taxon>Dictyosteliaceae</taxon>
        <taxon>Dictyostelium</taxon>
    </lineage>
</organism>
<protein>
    <recommendedName>
        <fullName>Uncharacterized transmembrane protein DDB_G0286421</fullName>
    </recommendedName>
</protein>
<feature type="chain" id="PRO_0000348509" description="Uncharacterized transmembrane protein DDB_G0286421">
    <location>
        <begin position="1"/>
        <end position="76"/>
    </location>
</feature>
<feature type="transmembrane region" description="Helical" evidence="1">
    <location>
        <begin position="40"/>
        <end position="60"/>
    </location>
</feature>
<proteinExistence type="predicted"/>
<dbReference type="EMBL" id="AAFI02000085">
    <property type="protein sequence ID" value="EAL64235.1"/>
    <property type="molecule type" value="Genomic_DNA"/>
</dbReference>
<dbReference type="RefSeq" id="XP_637745.1">
    <property type="nucleotide sequence ID" value="XM_632653.1"/>
</dbReference>
<dbReference type="FunCoup" id="Q54LT5">
    <property type="interactions" value="131"/>
</dbReference>
<dbReference type="PaxDb" id="44689-DDB0186967"/>
<dbReference type="EnsemblProtists" id="EAL64235">
    <property type="protein sequence ID" value="EAL64235"/>
    <property type="gene ID" value="DDB_G0286421"/>
</dbReference>
<dbReference type="GeneID" id="8625611"/>
<dbReference type="KEGG" id="ddi:DDB_G0286421"/>
<dbReference type="dictyBase" id="DDB_G0286421"/>
<dbReference type="VEuPathDB" id="AmoebaDB:DDB_G0286421"/>
<dbReference type="eggNOG" id="ENOG502RIHI">
    <property type="taxonomic scope" value="Eukaryota"/>
</dbReference>
<dbReference type="HOGENOM" id="CLU_2659722_0_0_1"/>
<dbReference type="InParanoid" id="Q54LT5"/>
<dbReference type="OMA" id="YRENFQV"/>
<dbReference type="PRO" id="PR:Q54LT5"/>
<dbReference type="Proteomes" id="UP000002195">
    <property type="component" value="Chromosome 4"/>
</dbReference>
<dbReference type="GO" id="GO:0016020">
    <property type="term" value="C:membrane"/>
    <property type="evidence" value="ECO:0007669"/>
    <property type="project" value="UniProtKB-SubCell"/>
</dbReference>